<gene>
    <name type="primary">ysnE</name>
    <name type="ordered locus">BSU28330</name>
</gene>
<keyword id="KW-0002">3D-structure</keyword>
<keyword id="KW-0012">Acyltransferase</keyword>
<keyword id="KW-1185">Reference proteome</keyword>
<keyword id="KW-0808">Transferase</keyword>
<evidence type="ECO:0000255" key="1">
    <source>
        <dbReference type="PROSITE-ProRule" id="PRU00532"/>
    </source>
</evidence>
<evidence type="ECO:0000305" key="2"/>
<evidence type="ECO:0007829" key="3">
    <source>
        <dbReference type="PDB" id="1YX0"/>
    </source>
</evidence>
<proteinExistence type="evidence at protein level"/>
<organism>
    <name type="scientific">Bacillus subtilis (strain 168)</name>
    <dbReference type="NCBI Taxonomy" id="224308"/>
    <lineage>
        <taxon>Bacteria</taxon>
        <taxon>Bacillati</taxon>
        <taxon>Bacillota</taxon>
        <taxon>Bacilli</taxon>
        <taxon>Bacillales</taxon>
        <taxon>Bacillaceae</taxon>
        <taxon>Bacillus</taxon>
    </lineage>
</organism>
<accession>P94562</accession>
<accession>Q795X9</accession>
<dbReference type="EC" id="2.3.1.-"/>
<dbReference type="EMBL" id="Z75208">
    <property type="protein sequence ID" value="CAA99559.1"/>
    <property type="molecule type" value="Genomic_DNA"/>
</dbReference>
<dbReference type="EMBL" id="AL009126">
    <property type="protein sequence ID" value="CAB14793.1"/>
    <property type="molecule type" value="Genomic_DNA"/>
</dbReference>
<dbReference type="PIR" id="F69986">
    <property type="entry name" value="F69986"/>
</dbReference>
<dbReference type="RefSeq" id="NP_390711.1">
    <property type="nucleotide sequence ID" value="NC_000964.3"/>
</dbReference>
<dbReference type="RefSeq" id="WP_004399128.1">
    <property type="nucleotide sequence ID" value="NZ_OZ025638.1"/>
</dbReference>
<dbReference type="PDB" id="1YX0">
    <property type="method" value="NMR"/>
    <property type="chains" value="A=1-151"/>
</dbReference>
<dbReference type="PDBsum" id="1YX0"/>
<dbReference type="BMRB" id="P94562"/>
<dbReference type="SMR" id="P94562"/>
<dbReference type="FunCoup" id="P94562">
    <property type="interactions" value="133"/>
</dbReference>
<dbReference type="STRING" id="224308.BSU28330"/>
<dbReference type="PaxDb" id="224308-BSU28330"/>
<dbReference type="EnsemblBacteria" id="CAB14793">
    <property type="protein sequence ID" value="CAB14793"/>
    <property type="gene ID" value="BSU_28330"/>
</dbReference>
<dbReference type="GeneID" id="937464"/>
<dbReference type="KEGG" id="bsu:BSU28330"/>
<dbReference type="PATRIC" id="fig|224308.179.peg.3077"/>
<dbReference type="eggNOG" id="COG0454">
    <property type="taxonomic scope" value="Bacteria"/>
</dbReference>
<dbReference type="InParanoid" id="P94562"/>
<dbReference type="OrthoDB" id="9803233at2"/>
<dbReference type="PhylomeDB" id="P94562"/>
<dbReference type="BioCyc" id="BSUB:BSU28330-MONOMER"/>
<dbReference type="EvolutionaryTrace" id="P94562"/>
<dbReference type="Proteomes" id="UP000001570">
    <property type="component" value="Chromosome"/>
</dbReference>
<dbReference type="GO" id="GO:0016747">
    <property type="term" value="F:acyltransferase activity, transferring groups other than amino-acyl groups"/>
    <property type="evidence" value="ECO:0007669"/>
    <property type="project" value="InterPro"/>
</dbReference>
<dbReference type="CDD" id="cd04301">
    <property type="entry name" value="NAT_SF"/>
    <property type="match status" value="1"/>
</dbReference>
<dbReference type="Gene3D" id="3.40.630.30">
    <property type="match status" value="1"/>
</dbReference>
<dbReference type="InterPro" id="IPR016181">
    <property type="entry name" value="Acyl_CoA_acyltransferase"/>
</dbReference>
<dbReference type="InterPro" id="IPR050832">
    <property type="entry name" value="Bact_Acetyltransf"/>
</dbReference>
<dbReference type="InterPro" id="IPR000182">
    <property type="entry name" value="GNAT_dom"/>
</dbReference>
<dbReference type="PANTHER" id="PTHR43877">
    <property type="entry name" value="AMINOALKYLPHOSPHONATE N-ACETYLTRANSFERASE-RELATED-RELATED"/>
    <property type="match status" value="1"/>
</dbReference>
<dbReference type="PANTHER" id="PTHR43877:SF5">
    <property type="entry name" value="BLL8307 PROTEIN"/>
    <property type="match status" value="1"/>
</dbReference>
<dbReference type="Pfam" id="PF00583">
    <property type="entry name" value="Acetyltransf_1"/>
    <property type="match status" value="1"/>
</dbReference>
<dbReference type="SUPFAM" id="SSF55729">
    <property type="entry name" value="Acyl-CoA N-acyltransferases (Nat)"/>
    <property type="match status" value="1"/>
</dbReference>
<dbReference type="PROSITE" id="PS51186">
    <property type="entry name" value="GNAT"/>
    <property type="match status" value="1"/>
</dbReference>
<reference key="1">
    <citation type="journal article" date="1996" name="Microbiology">
        <title>The dnaB-pheA (256 degrees-240 degrees) region of the Bacillus subtilis chromosome containing genes responsible for stress responses, the utilization of plant cell walls and primary metabolism.</title>
        <authorList>
            <person name="Wipat A."/>
            <person name="Carter N."/>
            <person name="Brignell C.S."/>
            <person name="Guy J.B."/>
            <person name="Piper K."/>
            <person name="Sanders J."/>
            <person name="Emmerson P.T."/>
            <person name="Harwood C.R."/>
        </authorList>
    </citation>
    <scope>NUCLEOTIDE SEQUENCE [GENOMIC DNA]</scope>
    <source>
        <strain>168</strain>
    </source>
</reference>
<reference key="2">
    <citation type="journal article" date="1997" name="Nature">
        <title>The complete genome sequence of the Gram-positive bacterium Bacillus subtilis.</title>
        <authorList>
            <person name="Kunst F."/>
            <person name="Ogasawara N."/>
            <person name="Moszer I."/>
            <person name="Albertini A.M."/>
            <person name="Alloni G."/>
            <person name="Azevedo V."/>
            <person name="Bertero M.G."/>
            <person name="Bessieres P."/>
            <person name="Bolotin A."/>
            <person name="Borchert S."/>
            <person name="Borriss R."/>
            <person name="Boursier L."/>
            <person name="Brans A."/>
            <person name="Braun M."/>
            <person name="Brignell S.C."/>
            <person name="Bron S."/>
            <person name="Brouillet S."/>
            <person name="Bruschi C.V."/>
            <person name="Caldwell B."/>
            <person name="Capuano V."/>
            <person name="Carter N.M."/>
            <person name="Choi S.-K."/>
            <person name="Codani J.-J."/>
            <person name="Connerton I.F."/>
            <person name="Cummings N.J."/>
            <person name="Daniel R.A."/>
            <person name="Denizot F."/>
            <person name="Devine K.M."/>
            <person name="Duesterhoeft A."/>
            <person name="Ehrlich S.D."/>
            <person name="Emmerson P.T."/>
            <person name="Entian K.-D."/>
            <person name="Errington J."/>
            <person name="Fabret C."/>
            <person name="Ferrari E."/>
            <person name="Foulger D."/>
            <person name="Fritz C."/>
            <person name="Fujita M."/>
            <person name="Fujita Y."/>
            <person name="Fuma S."/>
            <person name="Galizzi A."/>
            <person name="Galleron N."/>
            <person name="Ghim S.-Y."/>
            <person name="Glaser P."/>
            <person name="Goffeau A."/>
            <person name="Golightly E.J."/>
            <person name="Grandi G."/>
            <person name="Guiseppi G."/>
            <person name="Guy B.J."/>
            <person name="Haga K."/>
            <person name="Haiech J."/>
            <person name="Harwood C.R."/>
            <person name="Henaut A."/>
            <person name="Hilbert H."/>
            <person name="Holsappel S."/>
            <person name="Hosono S."/>
            <person name="Hullo M.-F."/>
            <person name="Itaya M."/>
            <person name="Jones L.-M."/>
            <person name="Joris B."/>
            <person name="Karamata D."/>
            <person name="Kasahara Y."/>
            <person name="Klaerr-Blanchard M."/>
            <person name="Klein C."/>
            <person name="Kobayashi Y."/>
            <person name="Koetter P."/>
            <person name="Koningstein G."/>
            <person name="Krogh S."/>
            <person name="Kumano M."/>
            <person name="Kurita K."/>
            <person name="Lapidus A."/>
            <person name="Lardinois S."/>
            <person name="Lauber J."/>
            <person name="Lazarevic V."/>
            <person name="Lee S.-M."/>
            <person name="Levine A."/>
            <person name="Liu H."/>
            <person name="Masuda S."/>
            <person name="Mauel C."/>
            <person name="Medigue C."/>
            <person name="Medina N."/>
            <person name="Mellado R.P."/>
            <person name="Mizuno M."/>
            <person name="Moestl D."/>
            <person name="Nakai S."/>
            <person name="Noback M."/>
            <person name="Noone D."/>
            <person name="O'Reilly M."/>
            <person name="Ogawa K."/>
            <person name="Ogiwara A."/>
            <person name="Oudega B."/>
            <person name="Park S.-H."/>
            <person name="Parro V."/>
            <person name="Pohl T.M."/>
            <person name="Portetelle D."/>
            <person name="Porwollik S."/>
            <person name="Prescott A.M."/>
            <person name="Presecan E."/>
            <person name="Pujic P."/>
            <person name="Purnelle B."/>
            <person name="Rapoport G."/>
            <person name="Rey M."/>
            <person name="Reynolds S."/>
            <person name="Rieger M."/>
            <person name="Rivolta C."/>
            <person name="Rocha E."/>
            <person name="Roche B."/>
            <person name="Rose M."/>
            <person name="Sadaie Y."/>
            <person name="Sato T."/>
            <person name="Scanlan E."/>
            <person name="Schleich S."/>
            <person name="Schroeter R."/>
            <person name="Scoffone F."/>
            <person name="Sekiguchi J."/>
            <person name="Sekowska A."/>
            <person name="Seror S.J."/>
            <person name="Serror P."/>
            <person name="Shin B.-S."/>
            <person name="Soldo B."/>
            <person name="Sorokin A."/>
            <person name="Tacconi E."/>
            <person name="Takagi T."/>
            <person name="Takahashi H."/>
            <person name="Takemaru K."/>
            <person name="Takeuchi M."/>
            <person name="Tamakoshi A."/>
            <person name="Tanaka T."/>
            <person name="Terpstra P."/>
            <person name="Tognoni A."/>
            <person name="Tosato V."/>
            <person name="Uchiyama S."/>
            <person name="Vandenbol M."/>
            <person name="Vannier F."/>
            <person name="Vassarotti A."/>
            <person name="Viari A."/>
            <person name="Wambutt R."/>
            <person name="Wedler E."/>
            <person name="Wedler H."/>
            <person name="Weitzenegger T."/>
            <person name="Winters P."/>
            <person name="Wipat A."/>
            <person name="Yamamoto H."/>
            <person name="Yamane K."/>
            <person name="Yasumoto K."/>
            <person name="Yata K."/>
            <person name="Yoshida K."/>
            <person name="Yoshikawa H.-F."/>
            <person name="Zumstein E."/>
            <person name="Yoshikawa H."/>
            <person name="Danchin A."/>
        </authorList>
    </citation>
    <scope>NUCLEOTIDE SEQUENCE [LARGE SCALE GENOMIC DNA]</scope>
    <source>
        <strain>168</strain>
    </source>
</reference>
<reference key="3">
    <citation type="submission" date="2005-03" db="PDB data bank">
        <title>Solution structure of Bacillus subtilis protein ysnE.</title>
        <authorList>
            <consortium name="Northeast structural genomics consortium (NESG)"/>
        </authorList>
    </citation>
    <scope>STRUCTURE BY NMR</scope>
</reference>
<feature type="chain" id="PRO_0000360166" description="Uncharacterized N-acetyltransferase YsnE">
    <location>
        <begin position="1"/>
        <end position="151"/>
    </location>
</feature>
<feature type="domain" description="N-acetyltransferase" evidence="1">
    <location>
        <begin position="3"/>
        <end position="151"/>
    </location>
</feature>
<feature type="strand" evidence="3">
    <location>
        <begin position="3"/>
        <end position="8"/>
    </location>
</feature>
<feature type="helix" evidence="3">
    <location>
        <begin position="11"/>
        <end position="19"/>
    </location>
</feature>
<feature type="helix" evidence="3">
    <location>
        <begin position="38"/>
        <end position="41"/>
    </location>
</feature>
<feature type="strand" evidence="3">
    <location>
        <begin position="42"/>
        <end position="45"/>
    </location>
</feature>
<feature type="strand" evidence="3">
    <location>
        <begin position="47"/>
        <end position="52"/>
    </location>
</feature>
<feature type="strand" evidence="3">
    <location>
        <begin position="54"/>
        <end position="67"/>
    </location>
</feature>
<feature type="strand" evidence="3">
    <location>
        <begin position="70"/>
        <end position="72"/>
    </location>
</feature>
<feature type="turn" evidence="3">
    <location>
        <begin position="80"/>
        <end position="82"/>
    </location>
</feature>
<feature type="helix" evidence="3">
    <location>
        <begin position="87"/>
        <end position="102"/>
    </location>
</feature>
<feature type="helix" evidence="3">
    <location>
        <begin position="117"/>
        <end position="125"/>
    </location>
</feature>
<feature type="strand" evidence="3">
    <location>
        <begin position="128"/>
        <end position="131"/>
    </location>
</feature>
<feature type="strand" evidence="3">
    <location>
        <begin position="147"/>
        <end position="149"/>
    </location>
</feature>
<protein>
    <recommendedName>
        <fullName>Uncharacterized N-acetyltransferase YsnE</fullName>
        <ecNumber>2.3.1.-</ecNumber>
    </recommendedName>
</protein>
<sequence>MHIKIDDLTGRQVVSLVNEHLHSMTLMSPPESIHALGLEKLRGPEITFWSAWEGDELAGCGALKELDTRHGEIKSMRTSASHLRKGVAKQVLQHIIEEAEKRGYERLSLETGSMASFEPARKLYESFGFQYCEPFADYGEDPNSVFMTKKL</sequence>
<name>YSNE_BACSU</name>
<comment type="similarity">
    <text evidence="2">Belongs to the acetyltransferase family.</text>
</comment>